<gene>
    <name type="primary">dnaK3</name>
    <name type="ordered locus">alr2446</name>
</gene>
<name>DNAK3_NOSS1</name>
<feature type="chain" id="PRO_0000078409" description="Chaperone protein dnaK3">
    <location>
        <begin position="1"/>
        <end position="653"/>
    </location>
</feature>
<feature type="modified residue" description="Phosphothreonine; by autocatalysis" evidence="1">
    <location>
        <position position="197"/>
    </location>
</feature>
<keyword id="KW-0067">ATP-binding</keyword>
<keyword id="KW-0143">Chaperone</keyword>
<keyword id="KW-0547">Nucleotide-binding</keyword>
<keyword id="KW-0597">Phosphoprotein</keyword>
<keyword id="KW-1185">Reference proteome</keyword>
<keyword id="KW-0346">Stress response</keyword>
<accession>Q8YUA6</accession>
<dbReference type="EMBL" id="BA000019">
    <property type="protein sequence ID" value="BAB74145.1"/>
    <property type="molecule type" value="Genomic_DNA"/>
</dbReference>
<dbReference type="PIR" id="AG2111">
    <property type="entry name" value="AG2111"/>
</dbReference>
<dbReference type="SMR" id="Q8YUA6"/>
<dbReference type="STRING" id="103690.gene:10494476"/>
<dbReference type="KEGG" id="ana:alr2446"/>
<dbReference type="eggNOG" id="COG0443">
    <property type="taxonomic scope" value="Bacteria"/>
</dbReference>
<dbReference type="OrthoDB" id="5410377at2"/>
<dbReference type="Proteomes" id="UP000002483">
    <property type="component" value="Chromosome"/>
</dbReference>
<dbReference type="GO" id="GO:0005524">
    <property type="term" value="F:ATP binding"/>
    <property type="evidence" value="ECO:0007669"/>
    <property type="project" value="UniProtKB-UniRule"/>
</dbReference>
<dbReference type="GO" id="GO:0140662">
    <property type="term" value="F:ATP-dependent protein folding chaperone"/>
    <property type="evidence" value="ECO:0007669"/>
    <property type="project" value="InterPro"/>
</dbReference>
<dbReference type="GO" id="GO:0051082">
    <property type="term" value="F:unfolded protein binding"/>
    <property type="evidence" value="ECO:0007669"/>
    <property type="project" value="InterPro"/>
</dbReference>
<dbReference type="CDD" id="cd10234">
    <property type="entry name" value="ASKHA_NBD_HSP70_DnaK-like"/>
    <property type="match status" value="1"/>
</dbReference>
<dbReference type="FunFam" id="2.60.34.10:FF:000014">
    <property type="entry name" value="Chaperone protein DnaK HSP70"/>
    <property type="match status" value="1"/>
</dbReference>
<dbReference type="FunFam" id="3.30.420.40:FF:000004">
    <property type="entry name" value="Molecular chaperone DnaK"/>
    <property type="match status" value="1"/>
</dbReference>
<dbReference type="FunFam" id="3.90.640.10:FF:000003">
    <property type="entry name" value="Molecular chaperone DnaK"/>
    <property type="match status" value="1"/>
</dbReference>
<dbReference type="Gene3D" id="1.20.1270.10">
    <property type="match status" value="1"/>
</dbReference>
<dbReference type="Gene3D" id="3.30.420.40">
    <property type="match status" value="2"/>
</dbReference>
<dbReference type="Gene3D" id="3.90.640.10">
    <property type="entry name" value="Actin, Chain A, domain 4"/>
    <property type="match status" value="1"/>
</dbReference>
<dbReference type="Gene3D" id="2.60.34.10">
    <property type="entry name" value="Substrate Binding Domain Of DNAk, Chain A, domain 1"/>
    <property type="match status" value="1"/>
</dbReference>
<dbReference type="HAMAP" id="MF_00332">
    <property type="entry name" value="DnaK"/>
    <property type="match status" value="1"/>
</dbReference>
<dbReference type="InterPro" id="IPR043129">
    <property type="entry name" value="ATPase_NBD"/>
</dbReference>
<dbReference type="InterPro" id="IPR012725">
    <property type="entry name" value="Chaperone_DnaK"/>
</dbReference>
<dbReference type="InterPro" id="IPR018181">
    <property type="entry name" value="Heat_shock_70_CS"/>
</dbReference>
<dbReference type="InterPro" id="IPR029048">
    <property type="entry name" value="HSP70_C_sf"/>
</dbReference>
<dbReference type="InterPro" id="IPR029047">
    <property type="entry name" value="HSP70_peptide-bd_sf"/>
</dbReference>
<dbReference type="InterPro" id="IPR013126">
    <property type="entry name" value="Hsp_70_fam"/>
</dbReference>
<dbReference type="NCBIfam" id="NF001413">
    <property type="entry name" value="PRK00290.1"/>
    <property type="match status" value="1"/>
</dbReference>
<dbReference type="NCBIfam" id="NF009947">
    <property type="entry name" value="PRK13411.1"/>
    <property type="match status" value="1"/>
</dbReference>
<dbReference type="NCBIfam" id="TIGR02350">
    <property type="entry name" value="prok_dnaK"/>
    <property type="match status" value="1"/>
</dbReference>
<dbReference type="PANTHER" id="PTHR19375">
    <property type="entry name" value="HEAT SHOCK PROTEIN 70KDA"/>
    <property type="match status" value="1"/>
</dbReference>
<dbReference type="Pfam" id="PF00012">
    <property type="entry name" value="HSP70"/>
    <property type="match status" value="1"/>
</dbReference>
<dbReference type="PRINTS" id="PR00301">
    <property type="entry name" value="HEATSHOCK70"/>
</dbReference>
<dbReference type="SUPFAM" id="SSF53067">
    <property type="entry name" value="Actin-like ATPase domain"/>
    <property type="match status" value="2"/>
</dbReference>
<dbReference type="SUPFAM" id="SSF100920">
    <property type="entry name" value="Heat shock protein 70kD (HSP70), peptide-binding domain"/>
    <property type="match status" value="1"/>
</dbReference>
<dbReference type="PROSITE" id="PS00297">
    <property type="entry name" value="HSP70_1"/>
    <property type="match status" value="1"/>
</dbReference>
<dbReference type="PROSITE" id="PS00329">
    <property type="entry name" value="HSP70_2"/>
    <property type="match status" value="1"/>
</dbReference>
<organism>
    <name type="scientific">Nostoc sp. (strain PCC 7120 / SAG 25.82 / UTEX 2576)</name>
    <dbReference type="NCBI Taxonomy" id="103690"/>
    <lineage>
        <taxon>Bacteria</taxon>
        <taxon>Bacillati</taxon>
        <taxon>Cyanobacteriota</taxon>
        <taxon>Cyanophyceae</taxon>
        <taxon>Nostocales</taxon>
        <taxon>Nostocaceae</taxon>
        <taxon>Nostoc</taxon>
    </lineage>
</organism>
<reference key="1">
    <citation type="journal article" date="2001" name="DNA Res.">
        <title>Complete genomic sequence of the filamentous nitrogen-fixing cyanobacterium Anabaena sp. strain PCC 7120.</title>
        <authorList>
            <person name="Kaneko T."/>
            <person name="Nakamura Y."/>
            <person name="Wolk C.P."/>
            <person name="Kuritz T."/>
            <person name="Sasamoto S."/>
            <person name="Watanabe A."/>
            <person name="Iriguchi M."/>
            <person name="Ishikawa A."/>
            <person name="Kawashima K."/>
            <person name="Kimura T."/>
            <person name="Kishida Y."/>
            <person name="Kohara M."/>
            <person name="Matsumoto M."/>
            <person name="Matsuno A."/>
            <person name="Muraki A."/>
            <person name="Nakazaki N."/>
            <person name="Shimpo S."/>
            <person name="Sugimoto M."/>
            <person name="Takazawa M."/>
            <person name="Yamada M."/>
            <person name="Yasuda M."/>
            <person name="Tabata S."/>
        </authorList>
    </citation>
    <scope>NUCLEOTIDE SEQUENCE [LARGE SCALE GENOMIC DNA]</scope>
    <source>
        <strain>PCC 7120 / SAG 25.82 / UTEX 2576</strain>
    </source>
</reference>
<comment type="function">
    <text evidence="1">Acts as a chaperone.</text>
</comment>
<comment type="induction">
    <text evidence="1">By stress conditions e.g. heat shock (By similarity).</text>
</comment>
<comment type="similarity">
    <text evidence="2">Belongs to the heat shock protein 70 family.</text>
</comment>
<evidence type="ECO:0000250" key="1"/>
<evidence type="ECO:0000305" key="2"/>
<protein>
    <recommendedName>
        <fullName>Chaperone protein dnaK3</fullName>
    </recommendedName>
    <alternativeName>
        <fullName>HSP70-3</fullName>
    </alternativeName>
    <alternativeName>
        <fullName>Heat shock 70 kDa protein 3</fullName>
    </alternativeName>
    <alternativeName>
        <fullName>Heat shock protein 70-3</fullName>
    </alternativeName>
</protein>
<sequence length="653" mass="71181">MGKVIGIDLGTTNSCVAVLEGGQPIVIANSEGGRTTPSIVGFGKSGDRLVGQLAKRQAVTNAENTIFSIKRFIGRRWEDTETERDRVPYGCVKGRDDTVDVQIRGRNYTPQEISAMILQKLKQDAENFLGEAVTQAVITVPAYFTDAQRQATKDAGTIAGLEVLRIINEPTAAALAFGLEKQDQEQLILVFDLGGGTFDVSILQLGDGVFEVKATSGNNQLGGDDFDGCVVCWMIERFQQQEKIDLAQDKMALQRLREAAEKAKIELSSMASTSINLPFITADETGPKHLEMELSRSKFEELVGQLIEATIQPMIQALKDADLKPQDIDKIILVGGSTRIPAVQNALIKFFNGKAPDRSVNPDEAVALGAAIQAGVLGGEVDNLLLLDVTPLSLGIETLGEVFTKIIERNTTIPTSKSQIFSTAVDGQTSVEIHILQGERTMARDNKSLGKFLLAGIPPASRGVPQIEVSFEIDVNGILKVAAQDKGTGREQSIRITNTGGLSTNEVERMRQEAEVFAEEDRRRKELVELKNQADNLLIIYESTLKDNGDLIGEQIKVLANEKVAQIQSVMTNPAISLKEFQQCLDDFQQTLFSIGANVYQRANTQTDDELEVMSDGSSPSDIEHPISGTLIPQFNFDFDDESTAQADYEAID</sequence>
<proteinExistence type="inferred from homology"/>